<proteinExistence type="inferred from homology"/>
<dbReference type="EMBL" id="BC133530">
    <property type="protein sequence ID" value="AAI33531.1"/>
    <property type="molecule type" value="mRNA"/>
</dbReference>
<dbReference type="RefSeq" id="NP_001157125.1">
    <property type="nucleotide sequence ID" value="NM_001163653.1"/>
</dbReference>
<dbReference type="SMR" id="A2VE22"/>
<dbReference type="FunCoup" id="A2VE22">
    <property type="interactions" value="40"/>
</dbReference>
<dbReference type="PaxDb" id="9913-ENSBTAP00000011255"/>
<dbReference type="Ensembl" id="ENSBTAT00000011255.6">
    <property type="protein sequence ID" value="ENSBTAP00000099388.1"/>
    <property type="gene ID" value="ENSBTAG00000008539.6"/>
</dbReference>
<dbReference type="GeneID" id="783487"/>
<dbReference type="KEGG" id="bta:783487"/>
<dbReference type="CTD" id="375704"/>
<dbReference type="VGNC" id="VGNC:28494">
    <property type="gene designation" value="ENHO"/>
</dbReference>
<dbReference type="eggNOG" id="ENOG502TDVU">
    <property type="taxonomic scope" value="Eukaryota"/>
</dbReference>
<dbReference type="GeneTree" id="ENSGT00390000001413"/>
<dbReference type="HOGENOM" id="CLU_197690_0_0_1"/>
<dbReference type="InParanoid" id="A2VE22"/>
<dbReference type="TreeFam" id="TF338522"/>
<dbReference type="Proteomes" id="UP000009136">
    <property type="component" value="Chromosome 8"/>
</dbReference>
<dbReference type="GO" id="GO:0005576">
    <property type="term" value="C:extracellular region"/>
    <property type="evidence" value="ECO:0007669"/>
    <property type="project" value="UniProtKB-SubCell"/>
</dbReference>
<dbReference type="GO" id="GO:0005886">
    <property type="term" value="C:plasma membrane"/>
    <property type="evidence" value="ECO:0000318"/>
    <property type="project" value="GO_Central"/>
</dbReference>
<dbReference type="GO" id="GO:0005179">
    <property type="term" value="F:hormone activity"/>
    <property type="evidence" value="ECO:0007669"/>
    <property type="project" value="Ensembl"/>
</dbReference>
<dbReference type="GO" id="GO:0045747">
    <property type="term" value="P:positive regulation of Notch signaling pathway"/>
    <property type="evidence" value="ECO:0000318"/>
    <property type="project" value="GO_Central"/>
</dbReference>
<dbReference type="InterPro" id="IPR034461">
    <property type="entry name" value="Adropin"/>
</dbReference>
<dbReference type="PANTHER" id="PTHR38492">
    <property type="entry name" value="ADROPIN"/>
    <property type="match status" value="1"/>
</dbReference>
<dbReference type="PANTHER" id="PTHR38492:SF1">
    <property type="entry name" value="ADROPIN"/>
    <property type="match status" value="1"/>
</dbReference>
<reference key="1">
    <citation type="submission" date="2007-02" db="EMBL/GenBank/DDBJ databases">
        <authorList>
            <consortium name="NIH - Mammalian Gene Collection (MGC) project"/>
        </authorList>
    </citation>
    <scope>NUCLEOTIDE SEQUENCE [LARGE SCALE MRNA]</scope>
    <source>
        <strain>Hereford</strain>
        <tissue>Brain cortex</tissue>
    </source>
</reference>
<gene>
    <name type="primary">ENHO</name>
</gene>
<accession>A2VE22</accession>
<feature type="signal peptide" evidence="2">
    <location>
        <begin position="1"/>
        <end position="33"/>
    </location>
</feature>
<feature type="chain" id="PRO_0000292878" description="Adropin">
    <location>
        <begin position="34"/>
        <end position="76"/>
    </location>
</feature>
<feature type="region of interest" description="Disordered" evidence="3">
    <location>
        <begin position="41"/>
        <end position="76"/>
    </location>
</feature>
<feature type="compositionally biased region" description="Pro residues" evidence="3">
    <location>
        <begin position="52"/>
        <end position="65"/>
    </location>
</feature>
<organism>
    <name type="scientific">Bos taurus</name>
    <name type="common">Bovine</name>
    <dbReference type="NCBI Taxonomy" id="9913"/>
    <lineage>
        <taxon>Eukaryota</taxon>
        <taxon>Metazoa</taxon>
        <taxon>Chordata</taxon>
        <taxon>Craniata</taxon>
        <taxon>Vertebrata</taxon>
        <taxon>Euteleostomi</taxon>
        <taxon>Mammalia</taxon>
        <taxon>Eutheria</taxon>
        <taxon>Laurasiatheria</taxon>
        <taxon>Artiodactyla</taxon>
        <taxon>Ruminantia</taxon>
        <taxon>Pecora</taxon>
        <taxon>Bovidae</taxon>
        <taxon>Bovinae</taxon>
        <taxon>Bos</taxon>
    </lineage>
</organism>
<keyword id="KW-1185">Reference proteome</keyword>
<keyword id="KW-0964">Secreted</keyword>
<keyword id="KW-0732">Signal</keyword>
<evidence type="ECO:0000250" key="1"/>
<evidence type="ECO:0000255" key="2"/>
<evidence type="ECO:0000256" key="3">
    <source>
        <dbReference type="SAM" id="MobiDB-lite"/>
    </source>
</evidence>
<sequence>MGAALSQGALIAIICNGLVGFLLLLLWVILCWACHSRSANIDSLSESSPNSSPGPCPEKAPPPQKPSHEGSYLLQP</sequence>
<protein>
    <recommendedName>
        <fullName>Adropin</fullName>
    </recommendedName>
    <alternativeName>
        <fullName>Energy homeostasis-associated protein</fullName>
    </alternativeName>
</protein>
<comment type="function">
    <text evidence="1">Involved in the regulation of glucose homeostasis and lipid metabolism.</text>
</comment>
<comment type="subcellular location">
    <subcellularLocation>
        <location evidence="1">Secreted</location>
    </subcellularLocation>
</comment>
<name>ENHO_BOVIN</name>